<name>SUVH5_ARATH</name>
<protein>
    <recommendedName>
        <fullName>Histone-lysine N-methyltransferase, H3 lysine-9 specific SUVH5</fullName>
        <ecNumber evidence="2">2.1.1.-</ecNumber>
        <ecNumber evidence="2">2.1.1.367</ecNumber>
    </recommendedName>
    <alternativeName>
        <fullName>Histone H3-K9 methyltransferase 5</fullName>
        <shortName>H3-K9-HMTase 5</shortName>
    </alternativeName>
    <alternativeName>
        <fullName>Protein SET DOMAIN GROUP 9</fullName>
    </alternativeName>
    <alternativeName>
        <fullName>Suppressor of variegation 3-9 homolog protein 5</fullName>
        <shortName>Su(var)3-9 homolog protein 5</shortName>
    </alternativeName>
</protein>
<accession>O82175</accession>
<keyword id="KW-0002">3D-structure</keyword>
<keyword id="KW-0137">Centromere</keyword>
<keyword id="KW-0156">Chromatin regulator</keyword>
<keyword id="KW-0158">Chromosome</keyword>
<keyword id="KW-0489">Methyltransferase</keyword>
<keyword id="KW-0539">Nucleus</keyword>
<keyword id="KW-1185">Reference proteome</keyword>
<keyword id="KW-0949">S-adenosyl-L-methionine</keyword>
<keyword id="KW-0808">Transferase</keyword>
<evidence type="ECO:0000250" key="1"/>
<evidence type="ECO:0000250" key="2">
    <source>
        <dbReference type="UniProtKB" id="Q8GZB6"/>
    </source>
</evidence>
<evidence type="ECO:0000255" key="3">
    <source>
        <dbReference type="PROSITE-ProRule" id="PRU00155"/>
    </source>
</evidence>
<evidence type="ECO:0000255" key="4">
    <source>
        <dbReference type="PROSITE-ProRule" id="PRU00157"/>
    </source>
</evidence>
<evidence type="ECO:0000255" key="5">
    <source>
        <dbReference type="PROSITE-ProRule" id="PRU00190"/>
    </source>
</evidence>
<evidence type="ECO:0000255" key="6">
    <source>
        <dbReference type="PROSITE-ProRule" id="PRU00358"/>
    </source>
</evidence>
<evidence type="ECO:0000255" key="7">
    <source>
        <dbReference type="PROSITE-ProRule" id="PRU00908"/>
    </source>
</evidence>
<evidence type="ECO:0000256" key="8">
    <source>
        <dbReference type="SAM" id="MobiDB-lite"/>
    </source>
</evidence>
<evidence type="ECO:0000269" key="9">
    <source>
    </source>
</evidence>
<evidence type="ECO:0007829" key="10">
    <source>
        <dbReference type="PDB" id="3Q0B"/>
    </source>
</evidence>
<evidence type="ECO:0007829" key="11">
    <source>
        <dbReference type="PDB" id="3Q0D"/>
    </source>
</evidence>
<reference key="1">
    <citation type="journal article" date="2001" name="Nucleic Acids Res.">
        <title>The Arabidopsis thaliana genome contains at least 29 active genes encoding SET domain proteins that can be assigned to four evolutionarily conserved classes.</title>
        <authorList>
            <person name="Baumbusch L.O."/>
            <person name="Thorstensen T."/>
            <person name="Krauss V."/>
            <person name="Fischer A."/>
            <person name="Naumann K."/>
            <person name="Assalkhou R."/>
            <person name="Schulz I."/>
            <person name="Reuter G."/>
            <person name="Aalen R.B."/>
        </authorList>
    </citation>
    <scope>NUCLEOTIDE SEQUENCE [MRNA]</scope>
    <scope>NOMENCLATURE</scope>
    <scope>TISSUE SPECIFICITY</scope>
</reference>
<reference key="2">
    <citation type="journal article" date="1999" name="Nature">
        <title>Sequence and analysis of chromosome 2 of the plant Arabidopsis thaliana.</title>
        <authorList>
            <person name="Lin X."/>
            <person name="Kaul S."/>
            <person name="Rounsley S.D."/>
            <person name="Shea T.P."/>
            <person name="Benito M.-I."/>
            <person name="Town C.D."/>
            <person name="Fujii C.Y."/>
            <person name="Mason T.M."/>
            <person name="Bowman C.L."/>
            <person name="Barnstead M.E."/>
            <person name="Feldblyum T.V."/>
            <person name="Buell C.R."/>
            <person name="Ketchum K.A."/>
            <person name="Lee J.J."/>
            <person name="Ronning C.M."/>
            <person name="Koo H.L."/>
            <person name="Moffat K.S."/>
            <person name="Cronin L.A."/>
            <person name="Shen M."/>
            <person name="Pai G."/>
            <person name="Van Aken S."/>
            <person name="Umayam L."/>
            <person name="Tallon L.J."/>
            <person name="Gill J.E."/>
            <person name="Adams M.D."/>
            <person name="Carrera A.J."/>
            <person name="Creasy T.H."/>
            <person name="Goodman H.M."/>
            <person name="Somerville C.R."/>
            <person name="Copenhaver G.P."/>
            <person name="Preuss D."/>
            <person name="Nierman W.C."/>
            <person name="White O."/>
            <person name="Eisen J.A."/>
            <person name="Salzberg S.L."/>
            <person name="Fraser C.M."/>
            <person name="Venter J.C."/>
        </authorList>
    </citation>
    <scope>NUCLEOTIDE SEQUENCE [LARGE SCALE GENOMIC DNA]</scope>
    <source>
        <strain>cv. Columbia</strain>
    </source>
</reference>
<reference key="3">
    <citation type="journal article" date="2017" name="Plant J.">
        <title>Araport11: a complete reannotation of the Arabidopsis thaliana reference genome.</title>
        <authorList>
            <person name="Cheng C.Y."/>
            <person name="Krishnakumar V."/>
            <person name="Chan A.P."/>
            <person name="Thibaud-Nissen F."/>
            <person name="Schobel S."/>
            <person name="Town C.D."/>
        </authorList>
    </citation>
    <scope>GENOME REANNOTATION</scope>
    <source>
        <strain>cv. Columbia</strain>
    </source>
</reference>
<reference key="4">
    <citation type="journal article" date="2003" name="Science">
        <title>Empirical analysis of transcriptional activity in the Arabidopsis genome.</title>
        <authorList>
            <person name="Yamada K."/>
            <person name="Lim J."/>
            <person name="Dale J.M."/>
            <person name="Chen H."/>
            <person name="Shinn P."/>
            <person name="Palm C.J."/>
            <person name="Southwick A.M."/>
            <person name="Wu H.C."/>
            <person name="Kim C.J."/>
            <person name="Nguyen M."/>
            <person name="Pham P.K."/>
            <person name="Cheuk R.F."/>
            <person name="Karlin-Newmann G."/>
            <person name="Liu S.X."/>
            <person name="Lam B."/>
            <person name="Sakano H."/>
            <person name="Wu T."/>
            <person name="Yu G."/>
            <person name="Miranda M."/>
            <person name="Quach H.L."/>
            <person name="Tripp M."/>
            <person name="Chang C.H."/>
            <person name="Lee J.M."/>
            <person name="Toriumi M.J."/>
            <person name="Chan M.M."/>
            <person name="Tang C.C."/>
            <person name="Onodera C.S."/>
            <person name="Deng J.M."/>
            <person name="Akiyama K."/>
            <person name="Ansari Y."/>
            <person name="Arakawa T."/>
            <person name="Banh J."/>
            <person name="Banno F."/>
            <person name="Bowser L."/>
            <person name="Brooks S.Y."/>
            <person name="Carninci P."/>
            <person name="Chao Q."/>
            <person name="Choy N."/>
            <person name="Enju A."/>
            <person name="Goldsmith A.D."/>
            <person name="Gurjal M."/>
            <person name="Hansen N.F."/>
            <person name="Hayashizaki Y."/>
            <person name="Johnson-Hopson C."/>
            <person name="Hsuan V.W."/>
            <person name="Iida K."/>
            <person name="Karnes M."/>
            <person name="Khan S."/>
            <person name="Koesema E."/>
            <person name="Ishida J."/>
            <person name="Jiang P.X."/>
            <person name="Jones T."/>
            <person name="Kawai J."/>
            <person name="Kamiya A."/>
            <person name="Meyers C."/>
            <person name="Nakajima M."/>
            <person name="Narusaka M."/>
            <person name="Seki M."/>
            <person name="Sakurai T."/>
            <person name="Satou M."/>
            <person name="Tamse R."/>
            <person name="Vaysberg M."/>
            <person name="Wallender E.K."/>
            <person name="Wong C."/>
            <person name="Yamamura Y."/>
            <person name="Yuan S."/>
            <person name="Shinozaki K."/>
            <person name="Davis R.W."/>
            <person name="Theologis A."/>
            <person name="Ecker J.R."/>
        </authorList>
    </citation>
    <scope>NUCLEOTIDE SEQUENCE [LARGE SCALE MRNA]</scope>
    <source>
        <strain>cv. Columbia</strain>
    </source>
</reference>
<reference key="5">
    <citation type="journal article" date="2006" name="J. Plant Physiol.">
        <title>Heterochromatin proteins and the control of heterochromatic gene silencing in Arabidopsis.</title>
        <authorList>
            <person name="Fischer A."/>
            <person name="Hofmann I."/>
            <person name="Naumann K."/>
            <person name="Reuter G."/>
        </authorList>
    </citation>
    <scope>GENE FAMILY</scope>
</reference>
<sequence length="794" mass="88153">MVHSESSILSSLRGGDGGGIPCSKDELAINGSYTDPMGRRKSKRFKVAAESEFSPDFGSITRQLRSRRMQKEFTVETYETRNVSDVCVLSSQADVELIPGEIVAERDSFKSVDCNDMSVGLTEGAESLGVNMQEPMKDRNMPENTSEQNMVEVHPPSISLPEEDMMGSVCRKSITGTKELHGRTISVGRDLSPNMGSKFSKNGKTAKRSISVEEENLVLEKSDSGDHLGPSPEVLELEKSEVWIITDKGVVMPSPVKPSEKRNGDYGEGSMRKNSERVALDKKRLASKFRLSNGGLPSCSSSGDSARYKVKETMRLFHETCKKIMQEEEARPRKRDGGNFKVVCEASKILKSKGKNLYSGTQIIGTVPGVEVGDEFQYRMELNLLGIHRPSQSGIDYMKDDGGELVATSIVSSGGYNDVLDNSDVLIYTGQGGNVGKKKNNEPPKDQQLVTGNLALKNSINKKNPVRVIRGIKNTTLQSSVVAKNYVYDGLYLVEEYWEETGSHGKLVFKFKLRRIPGQPELPWKEVAKSKKSEFRDGLCNVDITEGKETLPICAVNNLDDEKPPPFIYTAKMIYPDWCRPIPPKSCGCTNGCSKSKNCACIVKNGGKIPYYDGAIVEIKPLVYECGPHCKCPPSCNMRVSQHGIKIKLEIFKTESRGWGVRSLESIPIGSFICEYAGELLEDKQAESLTGKDEYLFDLGDEDDPFTINAAQKGNIGRFINHSCSPNLYAQDVLYDHEEIRIPHIMFFALDNIPPLQELSYDYNYKIDQVYDSNGNIKKKFCYCGSAECSGRLY</sequence>
<organism>
    <name type="scientific">Arabidopsis thaliana</name>
    <name type="common">Mouse-ear cress</name>
    <dbReference type="NCBI Taxonomy" id="3702"/>
    <lineage>
        <taxon>Eukaryota</taxon>
        <taxon>Viridiplantae</taxon>
        <taxon>Streptophyta</taxon>
        <taxon>Embryophyta</taxon>
        <taxon>Tracheophyta</taxon>
        <taxon>Spermatophyta</taxon>
        <taxon>Magnoliopsida</taxon>
        <taxon>eudicotyledons</taxon>
        <taxon>Gunneridae</taxon>
        <taxon>Pentapetalae</taxon>
        <taxon>rosids</taxon>
        <taxon>malvids</taxon>
        <taxon>Brassicales</taxon>
        <taxon>Brassicaceae</taxon>
        <taxon>Camelineae</taxon>
        <taxon>Arabidopsis</taxon>
    </lineage>
</organism>
<gene>
    <name type="primary">SUVH5</name>
    <name type="synonym">SDG9</name>
    <name type="synonym">SET9</name>
    <name type="ordered locus">At2g35160</name>
    <name type="ORF">T4C15.17</name>
</gene>
<feature type="chain" id="PRO_0000186076" description="Histone-lysine N-methyltransferase, H3 lysine-9 specific SUVH5">
    <location>
        <begin position="1"/>
        <end position="794"/>
    </location>
</feature>
<feature type="domain" description="YDG" evidence="6">
    <location>
        <begin position="365"/>
        <end position="515"/>
    </location>
</feature>
<feature type="domain" description="Pre-SET" evidence="4">
    <location>
        <begin position="585"/>
        <end position="644"/>
    </location>
</feature>
<feature type="domain" description="SET" evidence="5">
    <location>
        <begin position="647"/>
        <end position="764"/>
    </location>
</feature>
<feature type="domain" description="Post-SET" evidence="3">
    <location>
        <begin position="778"/>
        <end position="794"/>
    </location>
</feature>
<feature type="region of interest" description="Disordered" evidence="8">
    <location>
        <begin position="187"/>
        <end position="210"/>
    </location>
</feature>
<feature type="region of interest" description="Disordered" evidence="8">
    <location>
        <begin position="254"/>
        <end position="276"/>
    </location>
</feature>
<feature type="compositionally biased region" description="Polar residues" evidence="8">
    <location>
        <begin position="194"/>
        <end position="203"/>
    </location>
</feature>
<feature type="compositionally biased region" description="Basic and acidic residues" evidence="8">
    <location>
        <begin position="258"/>
        <end position="276"/>
    </location>
</feature>
<feature type="strand" evidence="10">
    <location>
        <begin position="375"/>
        <end position="377"/>
    </location>
</feature>
<feature type="helix" evidence="10">
    <location>
        <begin position="379"/>
        <end position="384"/>
    </location>
</feature>
<feature type="strand" evidence="10">
    <location>
        <begin position="394"/>
        <end position="399"/>
    </location>
</feature>
<feature type="strand" evidence="10">
    <location>
        <begin position="401"/>
        <end position="403"/>
    </location>
</feature>
<feature type="strand" evidence="10">
    <location>
        <begin position="405"/>
        <end position="415"/>
    </location>
</feature>
<feature type="strand" evidence="10">
    <location>
        <begin position="422"/>
        <end position="429"/>
    </location>
</feature>
<feature type="helix" evidence="10">
    <location>
        <begin position="451"/>
        <end position="462"/>
    </location>
</feature>
<feature type="strand" evidence="10">
    <location>
        <begin position="466"/>
        <end position="471"/>
    </location>
</feature>
<feature type="strand" evidence="10">
    <location>
        <begin position="486"/>
        <end position="501"/>
    </location>
</feature>
<feature type="strand" evidence="11">
    <location>
        <begin position="503"/>
        <end position="505"/>
    </location>
</feature>
<feature type="strand" evidence="10">
    <location>
        <begin position="507"/>
        <end position="515"/>
    </location>
</feature>
<feature type="strand" evidence="11">
    <location>
        <begin position="517"/>
        <end position="519"/>
    </location>
</feature>
<proteinExistence type="evidence at protein level"/>
<comment type="function">
    <text>Histone methyltransferase. Methylates 'Lys-9' of histone H3. H3 'Lys-9' methylation represents a specific tag for epigenetic transcriptional repression.</text>
</comment>
<comment type="catalytic activity">
    <reaction evidence="2">
        <text>N(6)-methyl-L-lysyl(9)-[histone H3] + S-adenosyl-L-methionine = N(6),N(6)-dimethyl-L-lysyl(9)-[histone H3] + S-adenosyl-L-homocysteine + H(+)</text>
        <dbReference type="Rhea" id="RHEA:60284"/>
        <dbReference type="Rhea" id="RHEA-COMP:15541"/>
        <dbReference type="Rhea" id="RHEA-COMP:15542"/>
        <dbReference type="ChEBI" id="CHEBI:15378"/>
        <dbReference type="ChEBI" id="CHEBI:57856"/>
        <dbReference type="ChEBI" id="CHEBI:59789"/>
        <dbReference type="ChEBI" id="CHEBI:61929"/>
        <dbReference type="ChEBI" id="CHEBI:61976"/>
    </reaction>
</comment>
<comment type="catalytic activity">
    <reaction evidence="2">
        <text>L-lysyl(9)-[histone H3] + S-adenosyl-L-methionine = N(6)-methyl-L-lysyl(9)-[histone H3] + S-adenosyl-L-homocysteine + H(+)</text>
        <dbReference type="Rhea" id="RHEA:60280"/>
        <dbReference type="Rhea" id="RHEA-COMP:15542"/>
        <dbReference type="Rhea" id="RHEA-COMP:15546"/>
        <dbReference type="ChEBI" id="CHEBI:15378"/>
        <dbReference type="ChEBI" id="CHEBI:29969"/>
        <dbReference type="ChEBI" id="CHEBI:57856"/>
        <dbReference type="ChEBI" id="CHEBI:59789"/>
        <dbReference type="ChEBI" id="CHEBI:61929"/>
        <dbReference type="EC" id="2.1.1.367"/>
    </reaction>
</comment>
<comment type="subcellular location">
    <subcellularLocation>
        <location evidence="6">Nucleus</location>
    </subcellularLocation>
    <subcellularLocation>
        <location evidence="1">Chromosome</location>
        <location evidence="1">Centromere</location>
    </subcellularLocation>
    <text evidence="1">Associates with centromeric constitutive heterochromatin.</text>
</comment>
<comment type="tissue specificity">
    <text evidence="9">Expressed in leaves stems and flowers.</text>
</comment>
<comment type="domain">
    <text>Although the SET domain contains the active site of enzymatic activity, both pre-SET and post-SET domains are required for methyltransferase activity.</text>
</comment>
<comment type="similarity">
    <text evidence="7">Belongs to the class V-like SAM-binding methyltransferase superfamily. Histone-lysine methyltransferase family. Suvar3-9 subfamily.</text>
</comment>
<dbReference type="EC" id="2.1.1.-" evidence="2"/>
<dbReference type="EC" id="2.1.1.367" evidence="2"/>
<dbReference type="EMBL" id="AF344448">
    <property type="protein sequence ID" value="AAK28970.1"/>
    <property type="molecule type" value="mRNA"/>
</dbReference>
<dbReference type="EMBL" id="AC004667">
    <property type="protein sequence ID" value="AAC61820.1"/>
    <property type="molecule type" value="Genomic_DNA"/>
</dbReference>
<dbReference type="EMBL" id="CP002685">
    <property type="protein sequence ID" value="AEC09075.1"/>
    <property type="molecule type" value="Genomic_DNA"/>
</dbReference>
<dbReference type="EMBL" id="CP002685">
    <property type="protein sequence ID" value="ANM62211.1"/>
    <property type="molecule type" value="Genomic_DNA"/>
</dbReference>
<dbReference type="EMBL" id="CP002685">
    <property type="protein sequence ID" value="ANM62213.1"/>
    <property type="molecule type" value="Genomic_DNA"/>
</dbReference>
<dbReference type="EMBL" id="CP002685">
    <property type="protein sequence ID" value="ANM62214.1"/>
    <property type="molecule type" value="Genomic_DNA"/>
</dbReference>
<dbReference type="EMBL" id="AY062735">
    <property type="protein sequence ID" value="AAL32813.1"/>
    <property type="molecule type" value="mRNA"/>
</dbReference>
<dbReference type="EMBL" id="BT003374">
    <property type="protein sequence ID" value="AAO30037.1"/>
    <property type="molecule type" value="mRNA"/>
</dbReference>
<dbReference type="PIR" id="D84765">
    <property type="entry name" value="D84765"/>
</dbReference>
<dbReference type="RefSeq" id="NP_001324386.1">
    <property type="nucleotide sequence ID" value="NM_001336549.1"/>
</dbReference>
<dbReference type="RefSeq" id="NP_001324388.1">
    <property type="nucleotide sequence ID" value="NM_001336548.1"/>
</dbReference>
<dbReference type="RefSeq" id="NP_001324389.1">
    <property type="nucleotide sequence ID" value="NM_001336547.1"/>
</dbReference>
<dbReference type="RefSeq" id="NP_181061.1">
    <property type="nucleotide sequence ID" value="NM_129070.3"/>
</dbReference>
<dbReference type="PDB" id="3Q0B">
    <property type="method" value="X-ray"/>
    <property type="resolution" value="2.20 A"/>
    <property type="chains" value="X=362-528"/>
</dbReference>
<dbReference type="PDB" id="3Q0C">
    <property type="method" value="X-ray"/>
    <property type="resolution" value="2.66 A"/>
    <property type="chains" value="A/X=362-528"/>
</dbReference>
<dbReference type="PDB" id="3Q0D">
    <property type="method" value="X-ray"/>
    <property type="resolution" value="2.37 A"/>
    <property type="chains" value="A/X=362-528"/>
</dbReference>
<dbReference type="PDB" id="3Q0F">
    <property type="method" value="X-ray"/>
    <property type="resolution" value="2.75 A"/>
    <property type="chains" value="A/X=362-528"/>
</dbReference>
<dbReference type="PDB" id="4YGI">
    <property type="method" value="X-ray"/>
    <property type="resolution" value="2.60 A"/>
    <property type="chains" value="A=362-528"/>
</dbReference>
<dbReference type="PDBsum" id="3Q0B"/>
<dbReference type="PDBsum" id="3Q0C"/>
<dbReference type="PDBsum" id="3Q0D"/>
<dbReference type="PDBsum" id="3Q0F"/>
<dbReference type="PDBsum" id="4YGI"/>
<dbReference type="SMR" id="O82175"/>
<dbReference type="BioGRID" id="3429">
    <property type="interactions" value="4"/>
</dbReference>
<dbReference type="DIP" id="DIP-62060N"/>
<dbReference type="FunCoup" id="O82175">
    <property type="interactions" value="34"/>
</dbReference>
<dbReference type="IntAct" id="O82175">
    <property type="interactions" value="8"/>
</dbReference>
<dbReference type="STRING" id="3702.O82175"/>
<dbReference type="PaxDb" id="3702-AT2G35160.1"/>
<dbReference type="ProteomicsDB" id="226521"/>
<dbReference type="EnsemblPlants" id="AT2G35160.1">
    <property type="protein sequence ID" value="AT2G35160.1"/>
    <property type="gene ID" value="AT2G35160"/>
</dbReference>
<dbReference type="EnsemblPlants" id="AT2G35160.2">
    <property type="protein sequence ID" value="AT2G35160.2"/>
    <property type="gene ID" value="AT2G35160"/>
</dbReference>
<dbReference type="EnsemblPlants" id="AT2G35160.3">
    <property type="protein sequence ID" value="AT2G35160.3"/>
    <property type="gene ID" value="AT2G35160"/>
</dbReference>
<dbReference type="EnsemblPlants" id="AT2G35160.4">
    <property type="protein sequence ID" value="AT2G35160.4"/>
    <property type="gene ID" value="AT2G35160"/>
</dbReference>
<dbReference type="GeneID" id="818083"/>
<dbReference type="Gramene" id="AT2G35160.1">
    <property type="protein sequence ID" value="AT2G35160.1"/>
    <property type="gene ID" value="AT2G35160"/>
</dbReference>
<dbReference type="Gramene" id="AT2G35160.2">
    <property type="protein sequence ID" value="AT2G35160.2"/>
    <property type="gene ID" value="AT2G35160"/>
</dbReference>
<dbReference type="Gramene" id="AT2G35160.3">
    <property type="protein sequence ID" value="AT2G35160.3"/>
    <property type="gene ID" value="AT2G35160"/>
</dbReference>
<dbReference type="Gramene" id="AT2G35160.4">
    <property type="protein sequence ID" value="AT2G35160.4"/>
    <property type="gene ID" value="AT2G35160"/>
</dbReference>
<dbReference type="KEGG" id="ath:AT2G35160"/>
<dbReference type="Araport" id="AT2G35160"/>
<dbReference type="TAIR" id="AT2G35160">
    <property type="gene designation" value="SUVH5"/>
</dbReference>
<dbReference type="eggNOG" id="KOG1082">
    <property type="taxonomic scope" value="Eukaryota"/>
</dbReference>
<dbReference type="HOGENOM" id="CLU_004556_0_0_1"/>
<dbReference type="InParanoid" id="O82175"/>
<dbReference type="PhylomeDB" id="O82175"/>
<dbReference type="EvolutionaryTrace" id="O82175"/>
<dbReference type="PRO" id="PR:O82175"/>
<dbReference type="Proteomes" id="UP000006548">
    <property type="component" value="Chromosome 2"/>
</dbReference>
<dbReference type="ExpressionAtlas" id="O82175">
    <property type="expression patterns" value="baseline and differential"/>
</dbReference>
<dbReference type="GO" id="GO:0000775">
    <property type="term" value="C:chromosome, centromeric region"/>
    <property type="evidence" value="ECO:0007669"/>
    <property type="project" value="UniProtKB-SubCell"/>
</dbReference>
<dbReference type="GO" id="GO:0005634">
    <property type="term" value="C:nucleus"/>
    <property type="evidence" value="ECO:0007669"/>
    <property type="project" value="UniProtKB-SubCell"/>
</dbReference>
<dbReference type="GO" id="GO:0140947">
    <property type="term" value="F:histone H3K9me2 methyltransferase activity"/>
    <property type="evidence" value="ECO:0007669"/>
    <property type="project" value="RHEA"/>
</dbReference>
<dbReference type="GO" id="GO:0042054">
    <property type="term" value="F:histone methyltransferase activity"/>
    <property type="evidence" value="ECO:0000314"/>
    <property type="project" value="TAIR"/>
</dbReference>
<dbReference type="GO" id="GO:0008270">
    <property type="term" value="F:zinc ion binding"/>
    <property type="evidence" value="ECO:0007669"/>
    <property type="project" value="InterPro"/>
</dbReference>
<dbReference type="GO" id="GO:0040029">
    <property type="term" value="P:epigenetic regulation of gene expression"/>
    <property type="evidence" value="ECO:0000304"/>
    <property type="project" value="TAIR"/>
</dbReference>
<dbReference type="GO" id="GO:0032259">
    <property type="term" value="P:methylation"/>
    <property type="evidence" value="ECO:0007669"/>
    <property type="project" value="UniProtKB-KW"/>
</dbReference>
<dbReference type="GO" id="GO:0031048">
    <property type="term" value="P:regulatory ncRNA-mediated heterochromatin formation"/>
    <property type="evidence" value="ECO:0000270"/>
    <property type="project" value="TAIR"/>
</dbReference>
<dbReference type="FunFam" id="2.30.280.10:FF:000003">
    <property type="entry name" value="Histone-lysine N-methyltransferase, H3 lysine-9 specific SUVH5"/>
    <property type="match status" value="1"/>
</dbReference>
<dbReference type="Gene3D" id="2.170.270.10">
    <property type="entry name" value="SET domain"/>
    <property type="match status" value="1"/>
</dbReference>
<dbReference type="Gene3D" id="2.30.280.10">
    <property type="entry name" value="SRA-YDG"/>
    <property type="match status" value="1"/>
</dbReference>
<dbReference type="InterPro" id="IPR025794">
    <property type="entry name" value="H3-K9-MeTrfase_plant"/>
</dbReference>
<dbReference type="InterPro" id="IPR051357">
    <property type="entry name" value="H3K9_HMTase_SUVAR3-9"/>
</dbReference>
<dbReference type="InterPro" id="IPR003616">
    <property type="entry name" value="Post-SET_dom"/>
</dbReference>
<dbReference type="InterPro" id="IPR007728">
    <property type="entry name" value="Pre-SET_dom"/>
</dbReference>
<dbReference type="InterPro" id="IPR015947">
    <property type="entry name" value="PUA-like_sf"/>
</dbReference>
<dbReference type="InterPro" id="IPR001214">
    <property type="entry name" value="SET_dom"/>
</dbReference>
<dbReference type="InterPro" id="IPR046341">
    <property type="entry name" value="SET_dom_sf"/>
</dbReference>
<dbReference type="InterPro" id="IPR036987">
    <property type="entry name" value="SRA-YDG_sf"/>
</dbReference>
<dbReference type="InterPro" id="IPR003105">
    <property type="entry name" value="SRA_YDG"/>
</dbReference>
<dbReference type="PANTHER" id="PTHR45660">
    <property type="entry name" value="HISTONE-LYSINE N-METHYLTRANSFERASE SETMAR"/>
    <property type="match status" value="1"/>
</dbReference>
<dbReference type="PANTHER" id="PTHR45660:SF53">
    <property type="entry name" value="HISTONE-LYSINE N-METHYLTRANSFERASE, H3 LYSINE-9 SPECIFIC SUVH5"/>
    <property type="match status" value="1"/>
</dbReference>
<dbReference type="Pfam" id="PF05033">
    <property type="entry name" value="Pre-SET"/>
    <property type="match status" value="1"/>
</dbReference>
<dbReference type="Pfam" id="PF02182">
    <property type="entry name" value="SAD_SRA"/>
    <property type="match status" value="1"/>
</dbReference>
<dbReference type="Pfam" id="PF00856">
    <property type="entry name" value="SET"/>
    <property type="match status" value="1"/>
</dbReference>
<dbReference type="SMART" id="SM00508">
    <property type="entry name" value="PostSET"/>
    <property type="match status" value="1"/>
</dbReference>
<dbReference type="SMART" id="SM00468">
    <property type="entry name" value="PreSET"/>
    <property type="match status" value="1"/>
</dbReference>
<dbReference type="SMART" id="SM00317">
    <property type="entry name" value="SET"/>
    <property type="match status" value="1"/>
</dbReference>
<dbReference type="SMART" id="SM00466">
    <property type="entry name" value="SRA"/>
    <property type="match status" value="1"/>
</dbReference>
<dbReference type="SUPFAM" id="SSF88697">
    <property type="entry name" value="PUA domain-like"/>
    <property type="match status" value="1"/>
</dbReference>
<dbReference type="SUPFAM" id="SSF82199">
    <property type="entry name" value="SET domain"/>
    <property type="match status" value="1"/>
</dbReference>
<dbReference type="PROSITE" id="PS50868">
    <property type="entry name" value="POST_SET"/>
    <property type="match status" value="1"/>
</dbReference>
<dbReference type="PROSITE" id="PS50867">
    <property type="entry name" value="PRE_SET"/>
    <property type="match status" value="1"/>
</dbReference>
<dbReference type="PROSITE" id="PS51575">
    <property type="entry name" value="SAM_MT43_SUVAR39_2"/>
    <property type="match status" value="1"/>
</dbReference>
<dbReference type="PROSITE" id="PS50280">
    <property type="entry name" value="SET"/>
    <property type="match status" value="1"/>
</dbReference>
<dbReference type="PROSITE" id="PS51015">
    <property type="entry name" value="YDG"/>
    <property type="match status" value="1"/>
</dbReference>